<dbReference type="EC" id="4.3.2.1" evidence="1"/>
<dbReference type="EMBL" id="CP000390">
    <property type="protein sequence ID" value="ABG64410.1"/>
    <property type="molecule type" value="Genomic_DNA"/>
</dbReference>
<dbReference type="SMR" id="Q11DW5"/>
<dbReference type="STRING" id="266779.Meso_3038"/>
<dbReference type="KEGG" id="mes:Meso_3038"/>
<dbReference type="eggNOG" id="COG0165">
    <property type="taxonomic scope" value="Bacteria"/>
</dbReference>
<dbReference type="HOGENOM" id="CLU_027272_2_3_5"/>
<dbReference type="OrthoDB" id="9769623at2"/>
<dbReference type="UniPathway" id="UPA00068">
    <property type="reaction ID" value="UER00114"/>
</dbReference>
<dbReference type="GO" id="GO:0005829">
    <property type="term" value="C:cytosol"/>
    <property type="evidence" value="ECO:0007669"/>
    <property type="project" value="TreeGrafter"/>
</dbReference>
<dbReference type="GO" id="GO:0004056">
    <property type="term" value="F:argininosuccinate lyase activity"/>
    <property type="evidence" value="ECO:0007669"/>
    <property type="project" value="UniProtKB-UniRule"/>
</dbReference>
<dbReference type="GO" id="GO:0042450">
    <property type="term" value="P:arginine biosynthetic process via ornithine"/>
    <property type="evidence" value="ECO:0007669"/>
    <property type="project" value="InterPro"/>
</dbReference>
<dbReference type="GO" id="GO:0006526">
    <property type="term" value="P:L-arginine biosynthetic process"/>
    <property type="evidence" value="ECO:0007669"/>
    <property type="project" value="UniProtKB-UniRule"/>
</dbReference>
<dbReference type="CDD" id="cd01359">
    <property type="entry name" value="Argininosuccinate_lyase"/>
    <property type="match status" value="1"/>
</dbReference>
<dbReference type="FunFam" id="1.10.275.10:FF:000002">
    <property type="entry name" value="Argininosuccinate lyase"/>
    <property type="match status" value="1"/>
</dbReference>
<dbReference type="FunFam" id="1.10.40.30:FF:000001">
    <property type="entry name" value="Argininosuccinate lyase"/>
    <property type="match status" value="1"/>
</dbReference>
<dbReference type="FunFam" id="1.20.200.10:FF:000015">
    <property type="entry name" value="argininosuccinate lyase isoform X2"/>
    <property type="match status" value="1"/>
</dbReference>
<dbReference type="Gene3D" id="1.10.40.30">
    <property type="entry name" value="Fumarase/aspartase (C-terminal domain)"/>
    <property type="match status" value="1"/>
</dbReference>
<dbReference type="Gene3D" id="1.20.200.10">
    <property type="entry name" value="Fumarase/aspartase (Central domain)"/>
    <property type="match status" value="1"/>
</dbReference>
<dbReference type="Gene3D" id="1.10.275.10">
    <property type="entry name" value="Fumarase/aspartase (N-terminal domain)"/>
    <property type="match status" value="1"/>
</dbReference>
<dbReference type="HAMAP" id="MF_00006">
    <property type="entry name" value="Arg_succ_lyase"/>
    <property type="match status" value="1"/>
</dbReference>
<dbReference type="InterPro" id="IPR029419">
    <property type="entry name" value="Arg_succ_lyase_C"/>
</dbReference>
<dbReference type="InterPro" id="IPR009049">
    <property type="entry name" value="Argininosuccinate_lyase"/>
</dbReference>
<dbReference type="InterPro" id="IPR024083">
    <property type="entry name" value="Fumarase/histidase_N"/>
</dbReference>
<dbReference type="InterPro" id="IPR020557">
    <property type="entry name" value="Fumarate_lyase_CS"/>
</dbReference>
<dbReference type="InterPro" id="IPR000362">
    <property type="entry name" value="Fumarate_lyase_fam"/>
</dbReference>
<dbReference type="InterPro" id="IPR022761">
    <property type="entry name" value="Fumarate_lyase_N"/>
</dbReference>
<dbReference type="InterPro" id="IPR008948">
    <property type="entry name" value="L-Aspartase-like"/>
</dbReference>
<dbReference type="NCBIfam" id="TIGR00838">
    <property type="entry name" value="argH"/>
    <property type="match status" value="1"/>
</dbReference>
<dbReference type="PANTHER" id="PTHR43814">
    <property type="entry name" value="ARGININOSUCCINATE LYASE"/>
    <property type="match status" value="1"/>
</dbReference>
<dbReference type="PANTHER" id="PTHR43814:SF1">
    <property type="entry name" value="ARGININOSUCCINATE LYASE"/>
    <property type="match status" value="1"/>
</dbReference>
<dbReference type="Pfam" id="PF14698">
    <property type="entry name" value="ASL_C2"/>
    <property type="match status" value="1"/>
</dbReference>
<dbReference type="Pfam" id="PF00206">
    <property type="entry name" value="Lyase_1"/>
    <property type="match status" value="1"/>
</dbReference>
<dbReference type="PRINTS" id="PR00145">
    <property type="entry name" value="ARGSUCLYASE"/>
</dbReference>
<dbReference type="PRINTS" id="PR00149">
    <property type="entry name" value="FUMRATELYASE"/>
</dbReference>
<dbReference type="SUPFAM" id="SSF48557">
    <property type="entry name" value="L-aspartase-like"/>
    <property type="match status" value="1"/>
</dbReference>
<dbReference type="PROSITE" id="PS00163">
    <property type="entry name" value="FUMARATE_LYASES"/>
    <property type="match status" value="1"/>
</dbReference>
<organism>
    <name type="scientific">Chelativorans sp. (strain BNC1)</name>
    <dbReference type="NCBI Taxonomy" id="266779"/>
    <lineage>
        <taxon>Bacteria</taxon>
        <taxon>Pseudomonadati</taxon>
        <taxon>Pseudomonadota</taxon>
        <taxon>Alphaproteobacteria</taxon>
        <taxon>Hyphomicrobiales</taxon>
        <taxon>Phyllobacteriaceae</taxon>
        <taxon>Chelativorans</taxon>
    </lineage>
</organism>
<comment type="catalytic activity">
    <reaction evidence="1">
        <text>2-(N(omega)-L-arginino)succinate = fumarate + L-arginine</text>
        <dbReference type="Rhea" id="RHEA:24020"/>
        <dbReference type="ChEBI" id="CHEBI:29806"/>
        <dbReference type="ChEBI" id="CHEBI:32682"/>
        <dbReference type="ChEBI" id="CHEBI:57472"/>
        <dbReference type="EC" id="4.3.2.1"/>
    </reaction>
</comment>
<comment type="pathway">
    <text evidence="1">Amino-acid biosynthesis; L-arginine biosynthesis; L-arginine from L-ornithine and carbamoyl phosphate: step 3/3.</text>
</comment>
<comment type="subcellular location">
    <subcellularLocation>
        <location evidence="1">Cytoplasm</location>
    </subcellularLocation>
</comment>
<comment type="similarity">
    <text evidence="1">Belongs to the lyase 1 family. Argininosuccinate lyase subfamily.</text>
</comment>
<proteinExistence type="inferred from homology"/>
<reference key="1">
    <citation type="submission" date="2006-06" db="EMBL/GenBank/DDBJ databases">
        <title>Complete sequence of chromosome of Mesorhizobium sp. BNC1.</title>
        <authorList>
            <consortium name="US DOE Joint Genome Institute"/>
            <person name="Copeland A."/>
            <person name="Lucas S."/>
            <person name="Lapidus A."/>
            <person name="Barry K."/>
            <person name="Detter J.C."/>
            <person name="Glavina del Rio T."/>
            <person name="Hammon N."/>
            <person name="Israni S."/>
            <person name="Dalin E."/>
            <person name="Tice H."/>
            <person name="Pitluck S."/>
            <person name="Chertkov O."/>
            <person name="Brettin T."/>
            <person name="Bruce D."/>
            <person name="Han C."/>
            <person name="Tapia R."/>
            <person name="Gilna P."/>
            <person name="Schmutz J."/>
            <person name="Larimer F."/>
            <person name="Land M."/>
            <person name="Hauser L."/>
            <person name="Kyrpides N."/>
            <person name="Mikhailova N."/>
            <person name="Richardson P."/>
        </authorList>
    </citation>
    <scope>NUCLEOTIDE SEQUENCE [LARGE SCALE GENOMIC DNA]</scope>
    <source>
        <strain>BNC1</strain>
    </source>
</reference>
<evidence type="ECO:0000255" key="1">
    <source>
        <dbReference type="HAMAP-Rule" id="MF_00006"/>
    </source>
</evidence>
<gene>
    <name evidence="1" type="primary">argH</name>
    <name type="ordered locus">Meso_3038</name>
</gene>
<protein>
    <recommendedName>
        <fullName evidence="1">Argininosuccinate lyase</fullName>
        <shortName evidence="1">ASAL</shortName>
        <ecNumber evidence="1">4.3.2.1</ecNumber>
    </recommendedName>
    <alternativeName>
        <fullName evidence="1">Arginosuccinase</fullName>
    </alternativeName>
</protein>
<keyword id="KW-0028">Amino-acid biosynthesis</keyword>
<keyword id="KW-0055">Arginine biosynthesis</keyword>
<keyword id="KW-0963">Cytoplasm</keyword>
<keyword id="KW-0456">Lyase</keyword>
<name>ARLY_CHESB</name>
<accession>Q11DW5</accession>
<sequence>MNENKASNRMWGGRFASGPDAIMEAINASIGFDRKLYAQDIRGSLAHAAMLAETGIISTEDEKKIAHGLNTILSEIEAGKFEFSTRLEDIHMNVEARLAELIGPAAGRLHTARSRNDQVAVDFRLWVKEELLRIDVALGGLIEAFLVRAEEHAATVMPGFTHLQTAQPVTFGHHLMAYVEMFGRDRTRVRDAVERLDESPLGAAALAGTSFPIDRHMTAKTLGFREPTRNSIDTVSDRDFALEFLSVSAICATHLSRLAEEIVIWSTSQFGFIRLSDAFSTGSSIMPQKKNPDAAELVRAKTGRINGHLIGLLTVMKGLPLAYSKDMQEDKEAVFDAAETLDLMLAAMTGMIGDMEVNAAAMKKAAGSGFSTATDLADWLVREAGLPFREAHHVTGRAVALAEERKCGLEKLALSDLQAIHPAITENIFSVLSVGNSVKSRTSFGGTAPAEVRRQVRYWKKRLKRDASLEKKG</sequence>
<feature type="chain" id="PRO_1000000497" description="Argininosuccinate lyase">
    <location>
        <begin position="1"/>
        <end position="473"/>
    </location>
</feature>